<protein>
    <recommendedName>
        <fullName>Small nuclear ribonucleoprotein E</fullName>
        <shortName>snRNP-E</shortName>
    </recommendedName>
    <alternativeName>
        <fullName>Sm protein E</fullName>
        <shortName>Sm-E</shortName>
        <shortName>SmE</shortName>
    </alternativeName>
</protein>
<organism>
    <name type="scientific">Homo sapiens</name>
    <name type="common">Human</name>
    <dbReference type="NCBI Taxonomy" id="9606"/>
    <lineage>
        <taxon>Eukaryota</taxon>
        <taxon>Metazoa</taxon>
        <taxon>Chordata</taxon>
        <taxon>Craniata</taxon>
        <taxon>Vertebrata</taxon>
        <taxon>Euteleostomi</taxon>
        <taxon>Mammalia</taxon>
        <taxon>Eutheria</taxon>
        <taxon>Euarchontoglires</taxon>
        <taxon>Primates</taxon>
        <taxon>Haplorrhini</taxon>
        <taxon>Catarrhini</taxon>
        <taxon>Hominidae</taxon>
        <taxon>Homo</taxon>
    </lineage>
</organism>
<accession>P62304</accession>
<accession>B2R5B9</accession>
<accession>P08578</accession>
<accession>Q15498</accession>
<accession>Q5BKT2</accession>
<name>RUXE_HUMAN</name>
<keyword id="KW-0002">3D-structure</keyword>
<keyword id="KW-0963">Cytoplasm</keyword>
<keyword id="KW-0225">Disease variant</keyword>
<keyword id="KW-1063">Hypotrichosis</keyword>
<keyword id="KW-0507">mRNA processing</keyword>
<keyword id="KW-0508">mRNA splicing</keyword>
<keyword id="KW-0539">Nucleus</keyword>
<keyword id="KW-1267">Proteomics identification</keyword>
<keyword id="KW-1185">Reference proteome</keyword>
<keyword id="KW-0687">Ribonucleoprotein</keyword>
<keyword id="KW-0694">RNA-binding</keyword>
<keyword id="KW-0747">Spliceosome</keyword>
<gene>
    <name type="primary">SNRPE</name>
</gene>
<feature type="chain" id="PRO_0000125529" description="Small nuclear ribonucleoprotein E">
    <location>
        <begin position="1"/>
        <end position="92"/>
    </location>
</feature>
<feature type="domain" description="Sm" evidence="1">
    <location>
        <begin position="18"/>
        <end position="92"/>
    </location>
</feature>
<feature type="sequence variant" id="VAR_069619" description="In HYPT11; does not affect subcellular localization; dbSNP:rs587776925." evidence="12">
    <original>G</original>
    <variation>S</variation>
    <location>
        <position position="45"/>
    </location>
</feature>
<feature type="helix" evidence="36">
    <location>
        <begin position="17"/>
        <end position="27"/>
    </location>
</feature>
<feature type="strand" evidence="36">
    <location>
        <begin position="30"/>
        <end position="37"/>
    </location>
</feature>
<feature type="strand" evidence="36">
    <location>
        <begin position="39"/>
        <end position="50"/>
    </location>
</feature>
<feature type="strand" evidence="36">
    <location>
        <begin position="56"/>
        <end position="68"/>
    </location>
</feature>
<feature type="strand" evidence="36">
    <location>
        <begin position="71"/>
        <end position="79"/>
    </location>
</feature>
<feature type="helix" evidence="36">
    <location>
        <begin position="81"/>
        <end position="83"/>
    </location>
</feature>
<feature type="strand" evidence="36">
    <location>
        <begin position="84"/>
        <end position="89"/>
    </location>
</feature>
<proteinExistence type="evidence at protein level"/>
<dbReference type="EMBL" id="M37716">
    <property type="protein sequence ID" value="AAA90926.1"/>
    <property type="molecule type" value="mRNA"/>
</dbReference>
<dbReference type="EMBL" id="M15919">
    <property type="protein sequence ID" value="AAA36621.1"/>
    <property type="molecule type" value="mRNA"/>
</dbReference>
<dbReference type="EMBL" id="X12466">
    <property type="protein sequence ID" value="CAA31007.1"/>
    <property type="molecule type" value="mRNA"/>
</dbReference>
<dbReference type="EMBL" id="AK312130">
    <property type="protein sequence ID" value="BAG35066.1"/>
    <property type="molecule type" value="mRNA"/>
</dbReference>
<dbReference type="EMBL" id="CH471067">
    <property type="protein sequence ID" value="EAW91494.1"/>
    <property type="molecule type" value="Genomic_DNA"/>
</dbReference>
<dbReference type="EMBL" id="BC002639">
    <property type="protein sequence ID" value="AAH02639.1"/>
    <property type="molecule type" value="mRNA"/>
</dbReference>
<dbReference type="EMBL" id="BC090951">
    <property type="protein sequence ID" value="AAH90951.1"/>
    <property type="molecule type" value="mRNA"/>
</dbReference>
<dbReference type="EMBL" id="M21258">
    <property type="protein sequence ID" value="AAB59365.1"/>
    <property type="status" value="ALT_SEQ"/>
    <property type="molecule type" value="Genomic_DNA"/>
</dbReference>
<dbReference type="EMBL" id="M21253">
    <property type="protein sequence ID" value="AAB59365.1"/>
    <property type="status" value="JOINED"/>
    <property type="molecule type" value="Genomic_DNA"/>
</dbReference>
<dbReference type="CCDS" id="CCDS30979.1"/>
<dbReference type="PIR" id="A32127">
    <property type="entry name" value="A32127"/>
</dbReference>
<dbReference type="RefSeq" id="NP_001291393.1">
    <property type="nucleotide sequence ID" value="NM_001304464.1"/>
</dbReference>
<dbReference type="RefSeq" id="NP_001315566.1">
    <property type="nucleotide sequence ID" value="NM_001328637.1"/>
</dbReference>
<dbReference type="RefSeq" id="NP_001315567.1">
    <property type="nucleotide sequence ID" value="NM_001328638.1"/>
</dbReference>
<dbReference type="RefSeq" id="NP_003085.1">
    <property type="nucleotide sequence ID" value="NM_003094.4"/>
</dbReference>
<dbReference type="PDB" id="3CW1">
    <property type="method" value="X-ray"/>
    <property type="resolution" value="5.49 A"/>
    <property type="chains" value="E/W/X/Y=1-92"/>
</dbReference>
<dbReference type="PDB" id="3JCR">
    <property type="method" value="EM"/>
    <property type="resolution" value="7.00 A"/>
    <property type="chains" value="S/s=1-92"/>
</dbReference>
<dbReference type="PDB" id="3PGW">
    <property type="method" value="X-ray"/>
    <property type="resolution" value="4.40 A"/>
    <property type="chains" value="E/H=1-92"/>
</dbReference>
<dbReference type="PDB" id="4F7U">
    <property type="method" value="X-ray"/>
    <property type="resolution" value="1.90 A"/>
    <property type="chains" value="E/H=1-92"/>
</dbReference>
<dbReference type="PDB" id="4PJO">
    <property type="method" value="X-ray"/>
    <property type="resolution" value="3.30 A"/>
    <property type="chains" value="E/S/e/s=1-92"/>
</dbReference>
<dbReference type="PDB" id="4V98">
    <property type="method" value="X-ray"/>
    <property type="resolution" value="3.10 A"/>
    <property type="chains" value="AC/AK/AS/Aa/Ai/Aq/Ay/BC/BK/BS/Ba/Bi/Bq/By/CC/CK/CS/Ca/Ci/Cq=1-92"/>
</dbReference>
<dbReference type="PDB" id="4WZJ">
    <property type="method" value="X-ray"/>
    <property type="resolution" value="3.60 A"/>
    <property type="chains" value="AE/AL/AS/BE/BL/BS/CE/CL/CS/DE/DL/DS=1-92"/>
</dbReference>
<dbReference type="PDB" id="5MQF">
    <property type="method" value="EM"/>
    <property type="resolution" value="5.90 A"/>
    <property type="chains" value="c/j=1-92"/>
</dbReference>
<dbReference type="PDB" id="5O9Z">
    <property type="method" value="EM"/>
    <property type="resolution" value="4.50 A"/>
    <property type="chains" value="U/c/j=1-92"/>
</dbReference>
<dbReference type="PDB" id="5XJC">
    <property type="method" value="EM"/>
    <property type="resolution" value="3.60 A"/>
    <property type="chains" value="e/l=1-92"/>
</dbReference>
<dbReference type="PDB" id="5XJL">
    <property type="method" value="X-ray"/>
    <property type="resolution" value="2.50 A"/>
    <property type="chains" value="E=1-92"/>
</dbReference>
<dbReference type="PDB" id="5XJQ">
    <property type="method" value="X-ray"/>
    <property type="resolution" value="3.28 A"/>
    <property type="chains" value="E=1-92"/>
</dbReference>
<dbReference type="PDB" id="5XJR">
    <property type="method" value="X-ray"/>
    <property type="resolution" value="3.12 A"/>
    <property type="chains" value="E=1-92"/>
</dbReference>
<dbReference type="PDB" id="5XJS">
    <property type="method" value="X-ray"/>
    <property type="resolution" value="3.38 A"/>
    <property type="chains" value="E=1-92"/>
</dbReference>
<dbReference type="PDB" id="5XJT">
    <property type="method" value="X-ray"/>
    <property type="resolution" value="2.92 A"/>
    <property type="chains" value="E=1-92"/>
</dbReference>
<dbReference type="PDB" id="5XJU">
    <property type="method" value="X-ray"/>
    <property type="resolution" value="2.58 A"/>
    <property type="chains" value="E=1-92"/>
</dbReference>
<dbReference type="PDB" id="5YZG">
    <property type="method" value="EM"/>
    <property type="resolution" value="4.10 A"/>
    <property type="chains" value="e/l=1-92"/>
</dbReference>
<dbReference type="PDB" id="5Z56">
    <property type="method" value="EM"/>
    <property type="resolution" value="5.10 A"/>
    <property type="chains" value="e/l=1-92"/>
</dbReference>
<dbReference type="PDB" id="5Z57">
    <property type="method" value="EM"/>
    <property type="resolution" value="6.50 A"/>
    <property type="chains" value="e/l=1-92"/>
</dbReference>
<dbReference type="PDB" id="5Z58">
    <property type="method" value="EM"/>
    <property type="resolution" value="4.90 A"/>
    <property type="chains" value="e/l=1-92"/>
</dbReference>
<dbReference type="PDB" id="6AH0">
    <property type="method" value="EM"/>
    <property type="resolution" value="5.70 A"/>
    <property type="chains" value="R/c/l=1-92"/>
</dbReference>
<dbReference type="PDB" id="6FF7">
    <property type="method" value="EM"/>
    <property type="resolution" value="4.50 A"/>
    <property type="chains" value="c/j=1-92"/>
</dbReference>
<dbReference type="PDB" id="6ICZ">
    <property type="method" value="EM"/>
    <property type="resolution" value="3.00 A"/>
    <property type="chains" value="e/l=1-92"/>
</dbReference>
<dbReference type="PDB" id="6ID0">
    <property type="method" value="EM"/>
    <property type="resolution" value="2.90 A"/>
    <property type="chains" value="e/l=1-92"/>
</dbReference>
<dbReference type="PDB" id="6ID1">
    <property type="method" value="EM"/>
    <property type="resolution" value="2.86 A"/>
    <property type="chains" value="e/l=1-92"/>
</dbReference>
<dbReference type="PDB" id="6QDV">
    <property type="method" value="EM"/>
    <property type="resolution" value="3.30 A"/>
    <property type="chains" value="e/p=11-91"/>
</dbReference>
<dbReference type="PDB" id="6QW6">
    <property type="method" value="EM"/>
    <property type="resolution" value="2.92 A"/>
    <property type="chains" value="4e/5e=1-92"/>
</dbReference>
<dbReference type="PDB" id="6QX9">
    <property type="method" value="EM"/>
    <property type="resolution" value="3.28 A"/>
    <property type="chains" value="1e/2e/4e/5e=1-92"/>
</dbReference>
<dbReference type="PDB" id="6V4X">
    <property type="method" value="EM"/>
    <property type="resolution" value="3.20 A"/>
    <property type="chains" value="E=1-92"/>
</dbReference>
<dbReference type="PDB" id="6Y53">
    <property type="method" value="EM"/>
    <property type="resolution" value="7.10 A"/>
    <property type="chains" value="j=1-92"/>
</dbReference>
<dbReference type="PDB" id="6Y5Q">
    <property type="method" value="EM"/>
    <property type="resolution" value="7.10 A"/>
    <property type="chains" value="j=1-92"/>
</dbReference>
<dbReference type="PDB" id="7A5P">
    <property type="method" value="EM"/>
    <property type="resolution" value="5.00 A"/>
    <property type="chains" value="e/j=1-92"/>
</dbReference>
<dbReference type="PDB" id="7ABG">
    <property type="method" value="EM"/>
    <property type="resolution" value="7.80 A"/>
    <property type="chains" value="c/j=1-92"/>
</dbReference>
<dbReference type="PDB" id="7ABI">
    <property type="method" value="EM"/>
    <property type="resolution" value="8.00 A"/>
    <property type="chains" value="c/j=1-92"/>
</dbReference>
<dbReference type="PDB" id="7B0Y">
    <property type="method" value="EM"/>
    <property type="resolution" value="3.60 A"/>
    <property type="chains" value="g=1-92"/>
</dbReference>
<dbReference type="PDB" id="7DVQ">
    <property type="method" value="EM"/>
    <property type="resolution" value="2.89 A"/>
    <property type="chains" value="e/l=1-92"/>
</dbReference>
<dbReference type="PDB" id="7EVO">
    <property type="method" value="EM"/>
    <property type="resolution" value="2.50 A"/>
    <property type="chains" value="c=1-92"/>
</dbReference>
<dbReference type="PDB" id="7QTT">
    <property type="method" value="EM"/>
    <property type="resolution" value="3.10 A"/>
    <property type="chains" value="i=1-92"/>
</dbReference>
<dbReference type="PDB" id="7VPX">
    <property type="method" value="EM"/>
    <property type="resolution" value="3.00 A"/>
    <property type="chains" value="c/l=1-92"/>
</dbReference>
<dbReference type="PDB" id="7W59">
    <property type="method" value="EM"/>
    <property type="resolution" value="3.60 A"/>
    <property type="chains" value="e/l=1-92"/>
</dbReference>
<dbReference type="PDB" id="7W5A">
    <property type="method" value="EM"/>
    <property type="resolution" value="3.60 A"/>
    <property type="chains" value="e/l=1-92"/>
</dbReference>
<dbReference type="PDB" id="7W5B">
    <property type="method" value="EM"/>
    <property type="resolution" value="4.30 A"/>
    <property type="chains" value="e/l=1-92"/>
</dbReference>
<dbReference type="PDB" id="8C6J">
    <property type="method" value="EM"/>
    <property type="resolution" value="2.80 A"/>
    <property type="chains" value="e/p=1-92"/>
</dbReference>
<dbReference type="PDB" id="8CH6">
    <property type="method" value="EM"/>
    <property type="resolution" value="5.90 A"/>
    <property type="chains" value="1/i=1-92"/>
</dbReference>
<dbReference type="PDB" id="8H6E">
    <property type="method" value="EM"/>
    <property type="resolution" value="3.20 A"/>
    <property type="chains" value="2e/4e/5e=1-92"/>
</dbReference>
<dbReference type="PDB" id="8H6J">
    <property type="method" value="EM"/>
    <property type="resolution" value="3.25 A"/>
    <property type="chains" value="2e/4e/5e=1-92"/>
</dbReference>
<dbReference type="PDB" id="8H6K">
    <property type="method" value="EM"/>
    <property type="resolution" value="2.70 A"/>
    <property type="chains" value="2e/4e/5e=1-92"/>
</dbReference>
<dbReference type="PDB" id="8H6L">
    <property type="method" value="EM"/>
    <property type="resolution" value="2.60 A"/>
    <property type="chains" value="2e/4e/5e=1-92"/>
</dbReference>
<dbReference type="PDB" id="8HK1">
    <property type="method" value="EM"/>
    <property type="resolution" value="2.70 A"/>
    <property type="chains" value="c=1-92"/>
</dbReference>
<dbReference type="PDB" id="8I0P">
    <property type="method" value="EM"/>
    <property type="resolution" value="3.40 A"/>
    <property type="chains" value="e/j=1-92"/>
</dbReference>
<dbReference type="PDB" id="8I0R">
    <property type="method" value="EM"/>
    <property type="resolution" value="3.00 A"/>
    <property type="chains" value="e/j=1-92"/>
</dbReference>
<dbReference type="PDB" id="8I0S">
    <property type="method" value="EM"/>
    <property type="resolution" value="4.20 A"/>
    <property type="chains" value="e/j=1-92"/>
</dbReference>
<dbReference type="PDB" id="8I0T">
    <property type="method" value="EM"/>
    <property type="resolution" value="3.00 A"/>
    <property type="chains" value="e/j=1-92"/>
</dbReference>
<dbReference type="PDB" id="8I0U">
    <property type="method" value="EM"/>
    <property type="resolution" value="3.30 A"/>
    <property type="chains" value="e/j=1-92"/>
</dbReference>
<dbReference type="PDB" id="8I0V">
    <property type="method" value="EM"/>
    <property type="resolution" value="3.00 A"/>
    <property type="chains" value="e/j=1-92"/>
</dbReference>
<dbReference type="PDB" id="8I0W">
    <property type="method" value="EM"/>
    <property type="resolution" value="3.40 A"/>
    <property type="chains" value="e/l=1-92"/>
</dbReference>
<dbReference type="PDB" id="8Q7Q">
    <property type="method" value="EM"/>
    <property type="resolution" value="3.20 A"/>
    <property type="chains" value="e=1-92"/>
</dbReference>
<dbReference type="PDB" id="8Q7V">
    <property type="method" value="EM"/>
    <property type="resolution" value="3.80 A"/>
    <property type="chains" value="e=1-92"/>
</dbReference>
<dbReference type="PDB" id="8Q7W">
    <property type="method" value="EM"/>
    <property type="resolution" value="3.90 A"/>
    <property type="chains" value="e=1-92"/>
</dbReference>
<dbReference type="PDB" id="8Q7X">
    <property type="method" value="EM"/>
    <property type="resolution" value="4.60 A"/>
    <property type="chains" value="e=1-92"/>
</dbReference>
<dbReference type="PDB" id="8Q91">
    <property type="method" value="EM"/>
    <property type="resolution" value="3.10 A"/>
    <property type="chains" value="l=1-92"/>
</dbReference>
<dbReference type="PDB" id="8QO9">
    <property type="method" value="EM"/>
    <property type="resolution" value="5.29 A"/>
    <property type="chains" value="2e/4e/5e=1-92"/>
</dbReference>
<dbReference type="PDB" id="8QXD">
    <property type="method" value="EM"/>
    <property type="resolution" value="9.60 A"/>
    <property type="chains" value="2e/4e/5e=1-92"/>
</dbReference>
<dbReference type="PDB" id="8QZS">
    <property type="method" value="EM"/>
    <property type="resolution" value="4.10 A"/>
    <property type="chains" value="2e/4e/5e=1-92"/>
</dbReference>
<dbReference type="PDB" id="8R08">
    <property type="method" value="EM"/>
    <property type="resolution" value="6.10 A"/>
    <property type="chains" value="1e/2e/4e/5e=1-92"/>
</dbReference>
<dbReference type="PDB" id="8R09">
    <property type="method" value="EM"/>
    <property type="resolution" value="4.30 A"/>
    <property type="chains" value="2e/4e/5e=1-92"/>
</dbReference>
<dbReference type="PDB" id="8R0A">
    <property type="method" value="EM"/>
    <property type="resolution" value="5.80 A"/>
    <property type="chains" value="2e/4e/5e=1-92"/>
</dbReference>
<dbReference type="PDB" id="8R0B">
    <property type="method" value="EM"/>
    <property type="resolution" value="4.40 A"/>
    <property type="chains" value="2e/4e/5e=1-92"/>
</dbReference>
<dbReference type="PDB" id="8R7N">
    <property type="method" value="EM"/>
    <property type="resolution" value="3.40 A"/>
    <property type="chains" value="l=1-92"/>
</dbReference>
<dbReference type="PDB" id="8RC0">
    <property type="method" value="EM"/>
    <property type="resolution" value="3.20 A"/>
    <property type="chains" value="l=1-92"/>
</dbReference>
<dbReference type="PDB" id="8RM5">
    <property type="method" value="EM"/>
    <property type="resolution" value="6.90 A"/>
    <property type="chains" value="2e/4e/5e=1-92"/>
</dbReference>
<dbReference type="PDB" id="8RO2">
    <property type="method" value="EM"/>
    <property type="resolution" value="3.50 A"/>
    <property type="chains" value="e=1-92"/>
</dbReference>
<dbReference type="PDB" id="8Y6O">
    <property type="method" value="EM"/>
    <property type="resolution" value="3.38 A"/>
    <property type="chains" value="e/l/s=1-92"/>
</dbReference>
<dbReference type="PDB" id="8Y7E">
    <property type="method" value="EM"/>
    <property type="resolution" value="4.66 A"/>
    <property type="chains" value="l=1-92"/>
</dbReference>
<dbReference type="PDB" id="9FMD">
    <property type="method" value="EM"/>
    <property type="resolution" value="3.30 A"/>
    <property type="chains" value="e/l=1-92"/>
</dbReference>
<dbReference type="PDB" id="9GBW">
    <property type="method" value="EM"/>
    <property type="resolution" value="3.50 A"/>
    <property type="chains" value="l=1-92"/>
</dbReference>
<dbReference type="PDB" id="9GC0">
    <property type="method" value="EM"/>
    <property type="resolution" value="3.20 A"/>
    <property type="chains" value="l=1-92"/>
</dbReference>
<dbReference type="PDB" id="9GCL">
    <property type="method" value="EM"/>
    <property type="resolution" value="3.00 A"/>
    <property type="chains" value="l=1-92"/>
</dbReference>
<dbReference type="PDBsum" id="3CW1"/>
<dbReference type="PDBsum" id="3JCR"/>
<dbReference type="PDBsum" id="3PGW"/>
<dbReference type="PDBsum" id="4F7U"/>
<dbReference type="PDBsum" id="4PJO"/>
<dbReference type="PDBsum" id="4V98"/>
<dbReference type="PDBsum" id="4WZJ"/>
<dbReference type="PDBsum" id="5MQF"/>
<dbReference type="PDBsum" id="5O9Z"/>
<dbReference type="PDBsum" id="5XJC"/>
<dbReference type="PDBsum" id="5XJL"/>
<dbReference type="PDBsum" id="5XJQ"/>
<dbReference type="PDBsum" id="5XJR"/>
<dbReference type="PDBsum" id="5XJS"/>
<dbReference type="PDBsum" id="5XJT"/>
<dbReference type="PDBsum" id="5XJU"/>
<dbReference type="PDBsum" id="5YZG"/>
<dbReference type="PDBsum" id="5Z56"/>
<dbReference type="PDBsum" id="5Z57"/>
<dbReference type="PDBsum" id="5Z58"/>
<dbReference type="PDBsum" id="6AH0"/>
<dbReference type="PDBsum" id="6FF7"/>
<dbReference type="PDBsum" id="6ICZ"/>
<dbReference type="PDBsum" id="6ID0"/>
<dbReference type="PDBsum" id="6ID1"/>
<dbReference type="PDBsum" id="6QDV"/>
<dbReference type="PDBsum" id="6QW6"/>
<dbReference type="PDBsum" id="6QX9"/>
<dbReference type="PDBsum" id="6V4X"/>
<dbReference type="PDBsum" id="6Y53"/>
<dbReference type="PDBsum" id="6Y5Q"/>
<dbReference type="PDBsum" id="7A5P"/>
<dbReference type="PDBsum" id="7ABG"/>
<dbReference type="PDBsum" id="7ABI"/>
<dbReference type="PDBsum" id="7B0Y"/>
<dbReference type="PDBsum" id="7DVQ"/>
<dbReference type="PDBsum" id="7EVO"/>
<dbReference type="PDBsum" id="7QTT"/>
<dbReference type="PDBsum" id="7VPX"/>
<dbReference type="PDBsum" id="7W59"/>
<dbReference type="PDBsum" id="7W5A"/>
<dbReference type="PDBsum" id="7W5B"/>
<dbReference type="PDBsum" id="8C6J"/>
<dbReference type="PDBsum" id="8CH6"/>
<dbReference type="PDBsum" id="8H6E"/>
<dbReference type="PDBsum" id="8H6J"/>
<dbReference type="PDBsum" id="8H6K"/>
<dbReference type="PDBsum" id="8H6L"/>
<dbReference type="PDBsum" id="8HK1"/>
<dbReference type="PDBsum" id="8I0P"/>
<dbReference type="PDBsum" id="8I0R"/>
<dbReference type="PDBsum" id="8I0S"/>
<dbReference type="PDBsum" id="8I0T"/>
<dbReference type="PDBsum" id="8I0U"/>
<dbReference type="PDBsum" id="8I0V"/>
<dbReference type="PDBsum" id="8I0W"/>
<dbReference type="PDBsum" id="8Q7Q"/>
<dbReference type="PDBsum" id="8Q7V"/>
<dbReference type="PDBsum" id="8Q7W"/>
<dbReference type="PDBsum" id="8Q7X"/>
<dbReference type="PDBsum" id="8Q91"/>
<dbReference type="PDBsum" id="8QO9"/>
<dbReference type="PDBsum" id="8QXD"/>
<dbReference type="PDBsum" id="8QZS"/>
<dbReference type="PDBsum" id="8R08"/>
<dbReference type="PDBsum" id="8R09"/>
<dbReference type="PDBsum" id="8R0A"/>
<dbReference type="PDBsum" id="8R0B"/>
<dbReference type="PDBsum" id="8R7N"/>
<dbReference type="PDBsum" id="8RC0"/>
<dbReference type="PDBsum" id="8RM5"/>
<dbReference type="PDBsum" id="8RO2"/>
<dbReference type="PDBsum" id="8Y6O"/>
<dbReference type="PDBsum" id="8Y7E"/>
<dbReference type="PDBsum" id="9FMD"/>
<dbReference type="PDBsum" id="9GBW"/>
<dbReference type="PDBsum" id="9GC0"/>
<dbReference type="PDBsum" id="9GCL"/>
<dbReference type="EMDB" id="EMD-10689"/>
<dbReference type="EMDB" id="EMD-11695"/>
<dbReference type="EMDB" id="EMD-11697"/>
<dbReference type="EMDB" id="EMD-11972"/>
<dbReference type="EMDB" id="EMD-14146"/>
<dbReference type="EMDB" id="EMD-16452"/>
<dbReference type="EMDB" id="EMD-16658"/>
<dbReference type="EMDB" id="EMD-18229"/>
<dbReference type="EMDB" id="EMD-18234"/>
<dbReference type="EMDB" id="EMD-18235"/>
<dbReference type="EMDB" id="EMD-18237"/>
<dbReference type="EMDB" id="EMD-18267"/>
<dbReference type="EMDB" id="EMD-18529"/>
<dbReference type="EMDB" id="EMD-18718"/>
<dbReference type="EMDB" id="EMD-18781"/>
<dbReference type="EMDB" id="EMD-18786"/>
<dbReference type="EMDB" id="EMD-18787"/>
<dbReference type="EMDB" id="EMD-18788"/>
<dbReference type="EMDB" id="EMD-18789"/>
<dbReference type="EMDB" id="EMD-18984"/>
<dbReference type="EMDB" id="EMD-19041"/>
<dbReference type="EMDB" id="EMD-19349"/>
<dbReference type="EMDB" id="EMD-19399"/>
<dbReference type="EMDB" id="EMD-21050"/>
<dbReference type="EMDB" id="EMD-30875"/>
<dbReference type="EMDB" id="EMD-31334"/>
<dbReference type="EMDB" id="EMD-32074"/>
<dbReference type="EMDB" id="EMD-32317"/>
<dbReference type="EMDB" id="EMD-32319"/>
<dbReference type="EMDB" id="EMD-32321"/>
<dbReference type="EMDB" id="EMD-34500"/>
<dbReference type="EMDB" id="EMD-34505"/>
<dbReference type="EMDB" id="EMD-34507"/>
<dbReference type="EMDB" id="EMD-34508"/>
<dbReference type="EMDB" id="EMD-34841"/>
<dbReference type="EMDB" id="EMD-35105"/>
<dbReference type="EMDB" id="EMD-35107"/>
<dbReference type="EMDB" id="EMD-35108"/>
<dbReference type="EMDB" id="EMD-35109"/>
<dbReference type="EMDB" id="EMD-35110"/>
<dbReference type="EMDB" id="EMD-35111"/>
<dbReference type="EMDB" id="EMD-35113"/>
<dbReference type="EMDB" id="EMD-3545"/>
<dbReference type="EMDB" id="EMD-3766"/>
<dbReference type="EMDB" id="EMD-38993"/>
<dbReference type="EMDB" id="EMD-39013"/>
<dbReference type="EMDB" id="EMD-4525"/>
<dbReference type="EMDB" id="EMD-4658"/>
<dbReference type="EMDB" id="EMD-4665"/>
<dbReference type="EMDB" id="EMD-51223"/>
<dbReference type="EMDB" id="EMD-51226"/>
<dbReference type="EMDB" id="EMD-51233"/>
<dbReference type="EMDB" id="EMD-6721"/>
<dbReference type="EMDB" id="EMD-6864"/>
<dbReference type="EMDB" id="EMD-6889"/>
<dbReference type="EMDB" id="EMD-6890"/>
<dbReference type="EMDB" id="EMD-6891"/>
<dbReference type="EMDB" id="EMD-9621"/>
<dbReference type="EMDB" id="EMD-9624"/>
<dbReference type="EMDB" id="EMD-9645"/>
<dbReference type="EMDB" id="EMD-9646"/>
<dbReference type="EMDB" id="EMD-9647"/>
<dbReference type="SMR" id="P62304"/>
<dbReference type="BioGRID" id="112519">
    <property type="interactions" value="310"/>
</dbReference>
<dbReference type="ComplexPortal" id="CPX-2391">
    <property type="entry name" value="U4/U6.U5 small nuclear ribonucleoprotein complex"/>
</dbReference>
<dbReference type="ComplexPortal" id="CPX-2392">
    <property type="entry name" value="U1 small nuclear ribonucleoprotein complex"/>
</dbReference>
<dbReference type="ComplexPortal" id="CPX-2539">
    <property type="entry name" value="U2 small nuclear ribonucleoprotein complex"/>
</dbReference>
<dbReference type="ComplexPortal" id="CPX-2705">
    <property type="entry name" value="U7 small nuclear ribonucleoprotein complex"/>
</dbReference>
<dbReference type="ComplexPortal" id="CPX-6033">
    <property type="entry name" value="Sm complex"/>
</dbReference>
<dbReference type="CORUM" id="P62304"/>
<dbReference type="DIP" id="DIP-31220N"/>
<dbReference type="FunCoup" id="P62304">
    <property type="interactions" value="2214"/>
</dbReference>
<dbReference type="IntAct" id="P62304">
    <property type="interactions" value="188"/>
</dbReference>
<dbReference type="MINT" id="P62304"/>
<dbReference type="STRING" id="9606.ENSP00000400591"/>
<dbReference type="GlyGen" id="P62304">
    <property type="glycosylation" value="2 sites, 1 N-linked glycan (1 site), 1 O-linked glycan (1 site)"/>
</dbReference>
<dbReference type="iPTMnet" id="P62304"/>
<dbReference type="MetOSite" id="P62304"/>
<dbReference type="PhosphoSitePlus" id="P62304"/>
<dbReference type="SwissPalm" id="P62304"/>
<dbReference type="BioMuta" id="SNRPE"/>
<dbReference type="DMDM" id="61237380"/>
<dbReference type="jPOST" id="P62304"/>
<dbReference type="MassIVE" id="P62304"/>
<dbReference type="PaxDb" id="9606-ENSP00000400591"/>
<dbReference type="PeptideAtlas" id="P62304"/>
<dbReference type="ProteomicsDB" id="57386"/>
<dbReference type="Pumba" id="P62304"/>
<dbReference type="TopDownProteomics" id="P62304"/>
<dbReference type="Antibodypedia" id="53843">
    <property type="antibodies" value="199 antibodies from 24 providers"/>
</dbReference>
<dbReference type="DNASU" id="6635"/>
<dbReference type="Ensembl" id="ENST00000414487.7">
    <property type="protein sequence ID" value="ENSP00000400591.2"/>
    <property type="gene ID" value="ENSG00000182004.13"/>
</dbReference>
<dbReference type="GeneID" id="6635"/>
<dbReference type="KEGG" id="hsa:6635"/>
<dbReference type="MANE-Select" id="ENST00000414487.7">
    <property type="protein sequence ID" value="ENSP00000400591.2"/>
    <property type="RefSeq nucleotide sequence ID" value="NM_003094.4"/>
    <property type="RefSeq protein sequence ID" value="NP_003085.1"/>
</dbReference>
<dbReference type="UCSC" id="uc001hai.4">
    <property type="organism name" value="human"/>
</dbReference>
<dbReference type="AGR" id="HGNC:11161"/>
<dbReference type="CTD" id="6635"/>
<dbReference type="DisGeNET" id="6635"/>
<dbReference type="GeneCards" id="SNRPE"/>
<dbReference type="HGNC" id="HGNC:11161">
    <property type="gene designation" value="SNRPE"/>
</dbReference>
<dbReference type="HPA" id="ENSG00000182004">
    <property type="expression patterns" value="Low tissue specificity"/>
</dbReference>
<dbReference type="MalaCards" id="SNRPE"/>
<dbReference type="MIM" id="128260">
    <property type="type" value="gene"/>
</dbReference>
<dbReference type="MIM" id="615059">
    <property type="type" value="phenotype"/>
</dbReference>
<dbReference type="neXtProt" id="NX_P62304"/>
<dbReference type="OpenTargets" id="ENSG00000182004"/>
<dbReference type="Orphanet" id="55654">
    <property type="disease" value="Hypotrichosis simplex"/>
</dbReference>
<dbReference type="PharmGKB" id="PA36002"/>
<dbReference type="VEuPathDB" id="HostDB:ENSG00000182004"/>
<dbReference type="eggNOG" id="KOG1774">
    <property type="taxonomic scope" value="Eukaryota"/>
</dbReference>
<dbReference type="GeneTree" id="ENSGT00390000012818"/>
<dbReference type="HOGENOM" id="CLU_125186_1_0_1"/>
<dbReference type="InParanoid" id="P62304"/>
<dbReference type="OMA" id="VPPINCI"/>
<dbReference type="OrthoDB" id="25620at2759"/>
<dbReference type="PAN-GO" id="P62304">
    <property type="GO annotations" value="7 GO annotations based on evolutionary models"/>
</dbReference>
<dbReference type="PhylomeDB" id="P62304"/>
<dbReference type="TreeFam" id="TF314419"/>
<dbReference type="PathwayCommons" id="P62304"/>
<dbReference type="Reactome" id="R-HSA-111367">
    <property type="pathway name" value="SLBP independent Processing of Histone Pre-mRNAs"/>
</dbReference>
<dbReference type="Reactome" id="R-HSA-191859">
    <property type="pathway name" value="snRNP Assembly"/>
</dbReference>
<dbReference type="Reactome" id="R-HSA-72163">
    <property type="pathway name" value="mRNA Splicing - Major Pathway"/>
</dbReference>
<dbReference type="Reactome" id="R-HSA-72165">
    <property type="pathway name" value="mRNA Splicing - Minor Pathway"/>
</dbReference>
<dbReference type="Reactome" id="R-HSA-73856">
    <property type="pathway name" value="RNA Polymerase II Transcription Termination"/>
</dbReference>
<dbReference type="Reactome" id="R-HSA-77588">
    <property type="pathway name" value="SLBP Dependent Processing of Replication-Dependent Histone Pre-mRNAs"/>
</dbReference>
<dbReference type="Reactome" id="R-HSA-9754678">
    <property type="pathway name" value="SARS-CoV-2 modulates host translation machinery"/>
</dbReference>
<dbReference type="SignaLink" id="P62304"/>
<dbReference type="SIGNOR" id="P62304"/>
<dbReference type="BioGRID-ORCS" id="6635">
    <property type="hits" value="785 hits in 1115 CRISPR screens"/>
</dbReference>
<dbReference type="CD-CODE" id="6F24707C">
    <property type="entry name" value="Cajal body"/>
</dbReference>
<dbReference type="CD-CODE" id="91857CE7">
    <property type="entry name" value="Nucleolus"/>
</dbReference>
<dbReference type="ChiTaRS" id="SNRPE">
    <property type="organism name" value="human"/>
</dbReference>
<dbReference type="EvolutionaryTrace" id="P62304"/>
<dbReference type="GenomeRNAi" id="6635"/>
<dbReference type="Pharos" id="P62304">
    <property type="development level" value="Tbio"/>
</dbReference>
<dbReference type="PRO" id="PR:P62304"/>
<dbReference type="Proteomes" id="UP000005640">
    <property type="component" value="Chromosome 1"/>
</dbReference>
<dbReference type="RNAct" id="P62304">
    <property type="molecule type" value="protein"/>
</dbReference>
<dbReference type="Bgee" id="ENSG00000182004">
    <property type="expression patterns" value="Expressed in ganglionic eminence and 108 other cell types or tissues"/>
</dbReference>
<dbReference type="ExpressionAtlas" id="P62304">
    <property type="expression patterns" value="baseline and differential"/>
</dbReference>
<dbReference type="GO" id="GO:0071013">
    <property type="term" value="C:catalytic step 2 spliceosome"/>
    <property type="evidence" value="ECO:0000314"/>
    <property type="project" value="UniProtKB"/>
</dbReference>
<dbReference type="GO" id="GO:0005829">
    <property type="term" value="C:cytosol"/>
    <property type="evidence" value="ECO:0000314"/>
    <property type="project" value="UniProtKB"/>
</dbReference>
<dbReference type="GO" id="GO:0034709">
    <property type="term" value="C:methylosome"/>
    <property type="evidence" value="ECO:0000314"/>
    <property type="project" value="UniProtKB"/>
</dbReference>
<dbReference type="GO" id="GO:0005654">
    <property type="term" value="C:nucleoplasm"/>
    <property type="evidence" value="ECO:0000304"/>
    <property type="project" value="Reactome"/>
</dbReference>
<dbReference type="GO" id="GO:0005634">
    <property type="term" value="C:nucleus"/>
    <property type="evidence" value="ECO:0000314"/>
    <property type="project" value="UniProtKB"/>
</dbReference>
<dbReference type="GO" id="GO:0034715">
    <property type="term" value="C:pICln-Sm protein complex"/>
    <property type="evidence" value="ECO:0000314"/>
    <property type="project" value="UniProtKB"/>
</dbReference>
<dbReference type="GO" id="GO:0071011">
    <property type="term" value="C:precatalytic spliceosome"/>
    <property type="evidence" value="ECO:0000318"/>
    <property type="project" value="GO_Central"/>
</dbReference>
<dbReference type="GO" id="GO:0030532">
    <property type="term" value="C:small nuclear ribonucleoprotein complex"/>
    <property type="evidence" value="ECO:0000303"/>
    <property type="project" value="UniProtKB"/>
</dbReference>
<dbReference type="GO" id="GO:0034719">
    <property type="term" value="C:SMN-Sm protein complex"/>
    <property type="evidence" value="ECO:0000314"/>
    <property type="project" value="UniProtKB"/>
</dbReference>
<dbReference type="GO" id="GO:0005681">
    <property type="term" value="C:spliceosomal complex"/>
    <property type="evidence" value="ECO:0000353"/>
    <property type="project" value="ComplexPortal"/>
</dbReference>
<dbReference type="GO" id="GO:0005697">
    <property type="term" value="C:telomerase holoenzyme complex"/>
    <property type="evidence" value="ECO:0000314"/>
    <property type="project" value="BHF-UCL"/>
</dbReference>
<dbReference type="GO" id="GO:0005685">
    <property type="term" value="C:U1 snRNP"/>
    <property type="evidence" value="ECO:0000314"/>
    <property type="project" value="UniProtKB"/>
</dbReference>
<dbReference type="GO" id="GO:0005689">
    <property type="term" value="C:U12-type spliceosomal complex"/>
    <property type="evidence" value="ECO:0000314"/>
    <property type="project" value="UniProtKB"/>
</dbReference>
<dbReference type="GO" id="GO:0005686">
    <property type="term" value="C:U2 snRNP"/>
    <property type="evidence" value="ECO:0000318"/>
    <property type="project" value="GO_Central"/>
</dbReference>
<dbReference type="GO" id="GO:0071007">
    <property type="term" value="C:U2-type catalytic step 2 spliceosome"/>
    <property type="evidence" value="ECO:0000314"/>
    <property type="project" value="UniProtKB"/>
</dbReference>
<dbReference type="GO" id="GO:0071005">
    <property type="term" value="C:U2-type precatalytic spliceosome"/>
    <property type="evidence" value="ECO:0000314"/>
    <property type="project" value="UniProtKB"/>
</dbReference>
<dbReference type="GO" id="GO:0005684">
    <property type="term" value="C:U2-type spliceosomal complex"/>
    <property type="evidence" value="ECO:0000314"/>
    <property type="project" value="UniProtKB"/>
</dbReference>
<dbReference type="GO" id="GO:0005687">
    <property type="term" value="C:U4 snRNP"/>
    <property type="evidence" value="ECO:0000314"/>
    <property type="project" value="UniProtKB"/>
</dbReference>
<dbReference type="GO" id="GO:0046540">
    <property type="term" value="C:U4/U6 x U5 tri-snRNP complex"/>
    <property type="evidence" value="ECO:0000314"/>
    <property type="project" value="UniProtKB"/>
</dbReference>
<dbReference type="GO" id="GO:0005682">
    <property type="term" value="C:U5 snRNP"/>
    <property type="evidence" value="ECO:0000318"/>
    <property type="project" value="GO_Central"/>
</dbReference>
<dbReference type="GO" id="GO:0005683">
    <property type="term" value="C:U7 snRNP"/>
    <property type="evidence" value="ECO:0000314"/>
    <property type="project" value="UniProtKB"/>
</dbReference>
<dbReference type="GO" id="GO:0003723">
    <property type="term" value="F:RNA binding"/>
    <property type="evidence" value="ECO:0007669"/>
    <property type="project" value="UniProtKB-KW"/>
</dbReference>
<dbReference type="GO" id="GO:0036261">
    <property type="term" value="P:7-methylguanosine cap hypermethylation"/>
    <property type="evidence" value="ECO:0000303"/>
    <property type="project" value="ComplexPortal"/>
</dbReference>
<dbReference type="GO" id="GO:0000398">
    <property type="term" value="P:mRNA splicing, via spliceosome"/>
    <property type="evidence" value="ECO:0000314"/>
    <property type="project" value="UniProtKB"/>
</dbReference>
<dbReference type="GO" id="GO:0000245">
    <property type="term" value="P:spliceosomal complex assembly"/>
    <property type="evidence" value="ECO:0000303"/>
    <property type="project" value="UniProtKB"/>
</dbReference>
<dbReference type="GO" id="GO:0000387">
    <property type="term" value="P:spliceosomal snRNP assembly"/>
    <property type="evidence" value="ECO:0000314"/>
    <property type="project" value="UniProtKB"/>
</dbReference>
<dbReference type="GO" id="GO:1903241">
    <property type="term" value="P:U2-type prespliceosome assembly"/>
    <property type="evidence" value="ECO:0000303"/>
    <property type="project" value="ComplexPortal"/>
</dbReference>
<dbReference type="CDD" id="cd01718">
    <property type="entry name" value="Sm_E"/>
    <property type="match status" value="1"/>
</dbReference>
<dbReference type="FunFam" id="2.30.30.100:FF:000059">
    <property type="entry name" value="Small nuclear ribonucleoprotein E"/>
    <property type="match status" value="1"/>
</dbReference>
<dbReference type="Gene3D" id="2.30.30.100">
    <property type="match status" value="1"/>
</dbReference>
<dbReference type="IDEAL" id="IID00156"/>
<dbReference type="InterPro" id="IPR010920">
    <property type="entry name" value="LSM_dom_sf"/>
</dbReference>
<dbReference type="InterPro" id="IPR047575">
    <property type="entry name" value="Sm"/>
</dbReference>
<dbReference type="InterPro" id="IPR001163">
    <property type="entry name" value="Sm_dom_euk/arc"/>
</dbReference>
<dbReference type="InterPro" id="IPR027078">
    <property type="entry name" value="snRNP-E"/>
</dbReference>
<dbReference type="PANTHER" id="PTHR11193">
    <property type="entry name" value="SMALL NUCLEAR RIBONUCLEOPROTEIN E"/>
    <property type="match status" value="1"/>
</dbReference>
<dbReference type="Pfam" id="PF01423">
    <property type="entry name" value="LSM"/>
    <property type="match status" value="1"/>
</dbReference>
<dbReference type="SMART" id="SM00651">
    <property type="entry name" value="Sm"/>
    <property type="match status" value="1"/>
</dbReference>
<dbReference type="SUPFAM" id="SSF50182">
    <property type="entry name" value="Sm-like ribonucleoproteins"/>
    <property type="match status" value="1"/>
</dbReference>
<dbReference type="PROSITE" id="PS52002">
    <property type="entry name" value="SM"/>
    <property type="match status" value="1"/>
</dbReference>
<reference key="1">
    <citation type="journal article" date="1988" name="Nucleic Acids Res.">
        <title>The complete primary structure of the human snRNP E protein.</title>
        <authorList>
            <person name="Stanford D.R."/>
            <person name="Kehl M."/>
            <person name="Perry C.A."/>
            <person name="Holicky E."/>
            <person name="Harvey S.E."/>
            <person name="Rohleder A.M."/>
            <person name="Rehder K."/>
            <person name="Luehrmann R."/>
            <person name="Wieben E.D."/>
        </authorList>
    </citation>
    <scope>NUCLEOTIDE SEQUENCE [MRNA]</scope>
</reference>
<reference key="2">
    <citation type="journal article" date="1988" name="J. Biol. Chem.">
        <title>The small nuclear ribonucleoprotein E protein gene contains four introns and has upstream similarities to genes for ribosomal proteins.</title>
        <authorList>
            <person name="Stanford D.R."/>
            <person name="Perry C.A."/>
            <person name="Holicky E."/>
            <person name="Rohleder A.M."/>
            <person name="Wieben E.D."/>
        </authorList>
    </citation>
    <scope>NUCLEOTIDE SEQUENCE [MRNA]</scope>
</reference>
<reference key="3">
    <citation type="journal article" date="2004" name="Nat. Genet.">
        <title>Complete sequencing and characterization of 21,243 full-length human cDNAs.</title>
        <authorList>
            <person name="Ota T."/>
            <person name="Suzuki Y."/>
            <person name="Nishikawa T."/>
            <person name="Otsuki T."/>
            <person name="Sugiyama T."/>
            <person name="Irie R."/>
            <person name="Wakamatsu A."/>
            <person name="Hayashi K."/>
            <person name="Sato H."/>
            <person name="Nagai K."/>
            <person name="Kimura K."/>
            <person name="Makita H."/>
            <person name="Sekine M."/>
            <person name="Obayashi M."/>
            <person name="Nishi T."/>
            <person name="Shibahara T."/>
            <person name="Tanaka T."/>
            <person name="Ishii S."/>
            <person name="Yamamoto J."/>
            <person name="Saito K."/>
            <person name="Kawai Y."/>
            <person name="Isono Y."/>
            <person name="Nakamura Y."/>
            <person name="Nagahari K."/>
            <person name="Murakami K."/>
            <person name="Yasuda T."/>
            <person name="Iwayanagi T."/>
            <person name="Wagatsuma M."/>
            <person name="Shiratori A."/>
            <person name="Sudo H."/>
            <person name="Hosoiri T."/>
            <person name="Kaku Y."/>
            <person name="Kodaira H."/>
            <person name="Kondo H."/>
            <person name="Sugawara M."/>
            <person name="Takahashi M."/>
            <person name="Kanda K."/>
            <person name="Yokoi T."/>
            <person name="Furuya T."/>
            <person name="Kikkawa E."/>
            <person name="Omura Y."/>
            <person name="Abe K."/>
            <person name="Kamihara K."/>
            <person name="Katsuta N."/>
            <person name="Sato K."/>
            <person name="Tanikawa M."/>
            <person name="Yamazaki M."/>
            <person name="Ninomiya K."/>
            <person name="Ishibashi T."/>
            <person name="Yamashita H."/>
            <person name="Murakawa K."/>
            <person name="Fujimori K."/>
            <person name="Tanai H."/>
            <person name="Kimata M."/>
            <person name="Watanabe M."/>
            <person name="Hiraoka S."/>
            <person name="Chiba Y."/>
            <person name="Ishida S."/>
            <person name="Ono Y."/>
            <person name="Takiguchi S."/>
            <person name="Watanabe S."/>
            <person name="Yosida M."/>
            <person name="Hotuta T."/>
            <person name="Kusano J."/>
            <person name="Kanehori K."/>
            <person name="Takahashi-Fujii A."/>
            <person name="Hara H."/>
            <person name="Tanase T.-O."/>
            <person name="Nomura Y."/>
            <person name="Togiya S."/>
            <person name="Komai F."/>
            <person name="Hara R."/>
            <person name="Takeuchi K."/>
            <person name="Arita M."/>
            <person name="Imose N."/>
            <person name="Musashino K."/>
            <person name="Yuuki H."/>
            <person name="Oshima A."/>
            <person name="Sasaki N."/>
            <person name="Aotsuka S."/>
            <person name="Yoshikawa Y."/>
            <person name="Matsunawa H."/>
            <person name="Ichihara T."/>
            <person name="Shiohata N."/>
            <person name="Sano S."/>
            <person name="Moriya S."/>
            <person name="Momiyama H."/>
            <person name="Satoh N."/>
            <person name="Takami S."/>
            <person name="Terashima Y."/>
            <person name="Suzuki O."/>
            <person name="Nakagawa S."/>
            <person name="Senoh A."/>
            <person name="Mizoguchi H."/>
            <person name="Goto Y."/>
            <person name="Shimizu F."/>
            <person name="Wakebe H."/>
            <person name="Hishigaki H."/>
            <person name="Watanabe T."/>
            <person name="Sugiyama A."/>
            <person name="Takemoto M."/>
            <person name="Kawakami B."/>
            <person name="Yamazaki M."/>
            <person name="Watanabe K."/>
            <person name="Kumagai A."/>
            <person name="Itakura S."/>
            <person name="Fukuzumi Y."/>
            <person name="Fujimori Y."/>
            <person name="Komiyama M."/>
            <person name="Tashiro H."/>
            <person name="Tanigami A."/>
            <person name="Fujiwara T."/>
            <person name="Ono T."/>
            <person name="Yamada K."/>
            <person name="Fujii Y."/>
            <person name="Ozaki K."/>
            <person name="Hirao M."/>
            <person name="Ohmori Y."/>
            <person name="Kawabata A."/>
            <person name="Hikiji T."/>
            <person name="Kobatake N."/>
            <person name="Inagaki H."/>
            <person name="Ikema Y."/>
            <person name="Okamoto S."/>
            <person name="Okitani R."/>
            <person name="Kawakami T."/>
            <person name="Noguchi S."/>
            <person name="Itoh T."/>
            <person name="Shigeta K."/>
            <person name="Senba T."/>
            <person name="Matsumura K."/>
            <person name="Nakajima Y."/>
            <person name="Mizuno T."/>
            <person name="Morinaga M."/>
            <person name="Sasaki M."/>
            <person name="Togashi T."/>
            <person name="Oyama M."/>
            <person name="Hata H."/>
            <person name="Watanabe M."/>
            <person name="Komatsu T."/>
            <person name="Mizushima-Sugano J."/>
            <person name="Satoh T."/>
            <person name="Shirai Y."/>
            <person name="Takahashi Y."/>
            <person name="Nakagawa K."/>
            <person name="Okumura K."/>
            <person name="Nagase T."/>
            <person name="Nomura N."/>
            <person name="Kikuchi H."/>
            <person name="Masuho Y."/>
            <person name="Yamashita R."/>
            <person name="Nakai K."/>
            <person name="Yada T."/>
            <person name="Nakamura Y."/>
            <person name="Ohara O."/>
            <person name="Isogai T."/>
            <person name="Sugano S."/>
        </authorList>
    </citation>
    <scope>NUCLEOTIDE SEQUENCE [LARGE SCALE MRNA]</scope>
    <source>
        <tissue>Cerebellum</tissue>
    </source>
</reference>
<reference key="4">
    <citation type="submission" date="2005-07" db="EMBL/GenBank/DDBJ databases">
        <authorList>
            <person name="Mural R.J."/>
            <person name="Istrail S."/>
            <person name="Sutton G.G."/>
            <person name="Florea L."/>
            <person name="Halpern A.L."/>
            <person name="Mobarry C.M."/>
            <person name="Lippert R."/>
            <person name="Walenz B."/>
            <person name="Shatkay H."/>
            <person name="Dew I."/>
            <person name="Miller J.R."/>
            <person name="Flanigan M.J."/>
            <person name="Edwards N.J."/>
            <person name="Bolanos R."/>
            <person name="Fasulo D."/>
            <person name="Halldorsson B.V."/>
            <person name="Hannenhalli S."/>
            <person name="Turner R."/>
            <person name="Yooseph S."/>
            <person name="Lu F."/>
            <person name="Nusskern D.R."/>
            <person name="Shue B.C."/>
            <person name="Zheng X.H."/>
            <person name="Zhong F."/>
            <person name="Delcher A.L."/>
            <person name="Huson D.H."/>
            <person name="Kravitz S.A."/>
            <person name="Mouchard L."/>
            <person name="Reinert K."/>
            <person name="Remington K.A."/>
            <person name="Clark A.G."/>
            <person name="Waterman M.S."/>
            <person name="Eichler E.E."/>
            <person name="Adams M.D."/>
            <person name="Hunkapiller M.W."/>
            <person name="Myers E.W."/>
            <person name="Venter J.C."/>
        </authorList>
    </citation>
    <scope>NUCLEOTIDE SEQUENCE [LARGE SCALE GENOMIC DNA]</scope>
</reference>
<reference key="5">
    <citation type="journal article" date="2004" name="Genome Res.">
        <title>The status, quality, and expansion of the NIH full-length cDNA project: the Mammalian Gene Collection (MGC).</title>
        <authorList>
            <consortium name="The MGC Project Team"/>
        </authorList>
    </citation>
    <scope>NUCLEOTIDE SEQUENCE [LARGE SCALE MRNA]</scope>
    <source>
        <tissue>Lung</tissue>
        <tissue>Uterus</tissue>
    </source>
</reference>
<reference key="6">
    <citation type="journal article" date="1987" name="J. Biol. Chem.">
        <title>DNA sequence of a human Sm autoimmune antigen. The multigene family contains a processed pseudogene.</title>
        <authorList>
            <person name="Stanford D.R."/>
            <person name="Rohleder A."/>
            <person name="Neiswanger K."/>
            <person name="Wieben E.D."/>
        </authorList>
    </citation>
    <scope>NUCLEOTIDE SEQUENCE [GENOMIC DNA] OF 12-92</scope>
</reference>
<reference key="7">
    <citation type="journal article" date="1999" name="Proc. Natl. Acad. Sci. U.S.A.">
        <title>SMN mutants of spinal muscular atrophy patients are defective in binding to snRNP proteins.</title>
        <authorList>
            <person name="Pellizzoni L."/>
            <person name="Charroux B."/>
            <person name="Dreyfuss G."/>
        </authorList>
    </citation>
    <scope>INTERACTION WITH SMN1</scope>
</reference>
<reference key="8">
    <citation type="journal article" date="2001" name="EMBO J.">
        <title>Purified U7 snRNPs lack the Sm proteins D1 and D2 but contain Lsm10, a new 14 kDa Sm D1-like protein.</title>
        <authorList>
            <person name="Pillai R.S."/>
            <person name="Will C.L."/>
            <person name="Luehrmann R."/>
            <person name="Schuemperli D."/>
            <person name="Mueller B."/>
        </authorList>
    </citation>
    <scope>IDENTIFICATION IN THE U7 SNRNP COMPLEX</scope>
    <scope>SUBUNIT</scope>
    <scope>SUBCELLULAR LOCATION</scope>
    <scope>IDENTIFICATION BY MASS SPECTROMETRY</scope>
</reference>
<reference key="9">
    <citation type="journal article" date="2002" name="RNA">
        <title>Purification and characterization of native spliceosomes suitable for three-dimensional structural analysis.</title>
        <authorList>
            <person name="Jurica M.S."/>
            <person name="Licklider L.J."/>
            <person name="Gygi S.P."/>
            <person name="Grigorieff N."/>
            <person name="Moore M.J."/>
        </authorList>
    </citation>
    <scope>IDENTIFICATION BY MASS SPECTROMETRY</scope>
    <scope>IDENTIFICATION IN THE SPLICEOSOMAL C COMPLEX</scope>
    <scope>FUNCTION</scope>
    <scope>SUBCELLULAR LOCATION</scope>
    <scope>SUBUNIT</scope>
</reference>
<reference key="10">
    <citation type="journal article" date="2003" name="Genes Dev.">
        <title>Unique Sm core structure of U7 snRNPs: assembly by a specialized SMN complex and the role of a new component, Lsm11, in histone RNA processing.</title>
        <authorList>
            <person name="Pillai R.S."/>
            <person name="Grimmler M."/>
            <person name="Meister G."/>
            <person name="Will C.L."/>
            <person name="Luehrmann R."/>
            <person name="Fischer U."/>
            <person name="Schuemperli D."/>
        </authorList>
    </citation>
    <scope>FUNCTION OF THE U7 SNRNP COMPLEX</scope>
</reference>
<reference key="11">
    <citation type="journal article" date="2004" name="RNA">
        <title>The human 18S U11/U12 snRNP contains a set of novel proteins not found in the U2-dependent spliceosome.</title>
        <authorList>
            <person name="Will C.L."/>
            <person name="Schneider C."/>
            <person name="Hossbach M."/>
            <person name="Urlaub H."/>
            <person name="Rauhut R."/>
            <person name="Elbashir S."/>
            <person name="Tuschl T."/>
            <person name="Luehrmann R."/>
        </authorList>
    </citation>
    <scope>IDENTIFICATION IN A COMPLEX WITH THE MINOR SPLICEOSOME</scope>
    <scope>IDENTIFICATION BY MASS SPECTROMETRY</scope>
</reference>
<reference key="12">
    <citation type="journal article" date="2005" name="Mol. Cell. Biol.">
        <title>Specific sequence features, recognized by the SMN complex, identify snRNAs and determine their fate as snRNPs.</title>
        <authorList>
            <person name="Golembe T.J."/>
            <person name="Yong J."/>
            <person name="Dreyfuss G."/>
        </authorList>
    </citation>
    <scope>IDENTIFICATION IN THE SMN-SM COMPLEX</scope>
</reference>
<reference key="13">
    <citation type="journal article" date="2008" name="Cell">
        <title>An assembly chaperone collaborates with the SMN complex to generate spliceosomal SnRNPs.</title>
        <authorList>
            <person name="Chari A."/>
            <person name="Golas M.M."/>
            <person name="Klingenhager M."/>
            <person name="Neuenkirchen N."/>
            <person name="Sander B."/>
            <person name="Englbrecht C."/>
            <person name="Sickmann A."/>
            <person name="Stark H."/>
            <person name="Fischer U."/>
        </authorList>
    </citation>
    <scope>FUNCTION IN SNRNP BIOGENESIS</scope>
    <scope>IDENTIFICATION IN 6S PICLN-SM COMPLEX</scope>
    <scope>IDENTIFICATION IN SMN-SM COMPLEX</scope>
    <scope>SUBCELLULAR LOCATION</scope>
</reference>
<reference key="14">
    <citation type="journal article" date="2011" name="BMC Syst. Biol.">
        <title>Initial characterization of the human central proteome.</title>
        <authorList>
            <person name="Burkard T.R."/>
            <person name="Planyavsky M."/>
            <person name="Kaupe I."/>
            <person name="Breitwieser F.P."/>
            <person name="Buerckstuemmer T."/>
            <person name="Bennett K.L."/>
            <person name="Superti-Furga G."/>
            <person name="Colinge J."/>
        </authorList>
    </citation>
    <scope>IDENTIFICATION BY MASS SPECTROMETRY [LARGE SCALE ANALYSIS]</scope>
</reference>
<reference key="15">
    <citation type="journal article" date="2013" name="Am. J. Hum. Genet.">
        <title>Mutations in SNRPE, which encodes a core protein of the spliceosome, cause autosomal-dominant hypotrichosis simplex.</title>
        <authorList>
            <person name="Pasternack S.M."/>
            <person name="Refke M."/>
            <person name="Paknia E."/>
            <person name="Hennies H.C."/>
            <person name="Franz T."/>
            <person name="Schaefer N."/>
            <person name="Fryer A."/>
            <person name="van Steensel M."/>
            <person name="Sweeney E."/>
            <person name="Just M."/>
            <person name="Grimm C."/>
            <person name="Kruse R."/>
            <person name="Ferrandiz C."/>
            <person name="Noethen M.M."/>
            <person name="Fischer U."/>
            <person name="Betz R.C."/>
        </authorList>
    </citation>
    <scope>FUNCTION</scope>
    <scope>SUBUNIT</scope>
    <scope>SUBCELLULAR LOCATION</scope>
    <scope>TISSUE SPECIFICITY</scope>
    <scope>VARIANT HYPT11 SER-45</scope>
    <scope>CHARACTERIZATION OF VARIANT HYPT11 SER-45</scope>
</reference>
<reference key="16">
    <citation type="journal article" date="2014" name="J. Proteomics">
        <title>An enzyme assisted RP-RPLC approach for in-depth analysis of human liver phosphoproteome.</title>
        <authorList>
            <person name="Bian Y."/>
            <person name="Song C."/>
            <person name="Cheng K."/>
            <person name="Dong M."/>
            <person name="Wang F."/>
            <person name="Huang J."/>
            <person name="Sun D."/>
            <person name="Wang L."/>
            <person name="Ye M."/>
            <person name="Zou H."/>
        </authorList>
    </citation>
    <scope>IDENTIFICATION BY MASS SPECTROMETRY [LARGE SCALE ANALYSIS]</scope>
    <source>
        <tissue>Liver</tissue>
    </source>
</reference>
<reference key="17">
    <citation type="journal article" date="2009" name="Nature">
        <title>Crystal structure of human spliceosomal U1 snRNP at 5.5 A resolution.</title>
        <authorList>
            <person name="Pomeranz Krummel D.A."/>
            <person name="Oubridge C."/>
            <person name="Leung A.K."/>
            <person name="Li J."/>
            <person name="Nagai K."/>
        </authorList>
    </citation>
    <scope>X-RAY CRYSTALLOGRAPHY (5.49 ANGSTROMS) IN SPLICEOSOMAL U1 SNRNP</scope>
    <scope>FUNCTION</scope>
    <scope>SUBUNIT</scope>
</reference>
<reference evidence="29" key="18">
    <citation type="journal article" date="2011" name="Cell">
        <title>Structure of a key intermediate of the SMN complex reveals Gemin2's crucial function in snRNP assembly.</title>
        <authorList>
            <person name="Zhang R."/>
            <person name="So B.R."/>
            <person name="Li P."/>
            <person name="Yong J."/>
            <person name="Glisovic T."/>
            <person name="Wan L."/>
            <person name="Dreyfuss G."/>
        </authorList>
    </citation>
    <scope>X-RAY CRYSTALLOGRAPHY (2.50 ANGSTROMS) IN COMPLEX WITH SNRPD1; SNRPD2; SNRPF; SNRPG; SMN1 AND GEMIN2</scope>
    <scope>INTERACTION WITH GEMIN2; SNRPF AND SNRPG</scope>
</reference>
<reference key="19">
    <citation type="journal article" date="2011" name="Nature">
        <title>Structure of the spliceosomal U4 snRNP core domain and its implication for snRNP biogenesis.</title>
        <authorList>
            <person name="Leung A.K."/>
            <person name="Nagai K."/>
            <person name="Li J."/>
        </authorList>
    </citation>
    <scope>X-RAY CRYSTALLOGRAPHY (3.60 ANGSTROMS) IN SPLICEOSOMAL CORE U4 SNRNP</scope>
    <scope>SUBUNIT</scope>
</reference>
<reference key="20">
    <citation type="journal article" date="2013" name="Mol. Cell">
        <title>Structural basis of assembly chaperone-mediated snRNP formation.</title>
        <authorList>
            <person name="Grimm C."/>
            <person name="Chari A."/>
            <person name="Pelz J.P."/>
            <person name="Kuper J."/>
            <person name="Kisker C."/>
            <person name="Diederichs K."/>
            <person name="Stark H."/>
            <person name="Schindelin H."/>
            <person name="Fischer U."/>
        </authorList>
    </citation>
    <scope>X-RAY CRYSTALLOGRAPHY (1.90 ANGSTROMS) IN 6S PICLN-SM COMPLEX</scope>
    <scope>IDENTIFICATION IN 6S PICLN-SM COMPLEX</scope>
    <scope>FUNCTION IN CORE U1 SNRNP BIOGENESIS</scope>
</reference>
<reference evidence="25" key="21">
    <citation type="journal article" date="2015" name="Elife">
        <title>Crystal structure of human U1 snRNP, a small nuclear ribonucleoprotein particle, reveals the mechanism of 5' splice site recognition.</title>
        <authorList>
            <person name="Kondo Y."/>
            <person name="Oubridge C."/>
            <person name="van Roon A.M."/>
            <person name="Nagai K."/>
        </authorList>
    </citation>
    <scope>X-RAY CRYSTALLOGRAPHY (3.30 ANGSTROMS)</scope>
    <scope>SUBUNIT</scope>
</reference>
<reference evidence="24" key="22">
    <citation type="journal article" date="2016" name="Science">
        <title>Molecular architecture of the human U4/U6.U5 tri-snRNP.</title>
        <authorList>
            <person name="Agafonov D.E."/>
            <person name="Kastner B."/>
            <person name="Dybkov O."/>
            <person name="Hofele R.V."/>
            <person name="Liu W.T."/>
            <person name="Urlaub H."/>
            <person name="Luhrmann R."/>
            <person name="Stark H."/>
        </authorList>
    </citation>
    <scope>STRUCTURE BY ELECTRON MICROSCOPY (7.00 ANGSTROMS)</scope>
    <scope>SUBCELLULAR LOCATION</scope>
    <scope>SUBUNIT</scope>
    <scope>IDENTIFICATION BY MASS SPECTROMETRY</scope>
</reference>
<reference evidence="28" key="23">
    <citation type="journal article" date="2017" name="Cell">
        <title>An Atomic Structure of the Human Spliceosome.</title>
        <authorList>
            <person name="Zhang X."/>
            <person name="Yan C."/>
            <person name="Hang J."/>
            <person name="Finci L.I."/>
            <person name="Lei J."/>
            <person name="Shi Y."/>
        </authorList>
    </citation>
    <scope>STRUCTURE BY ELECTRON MICROSCOPY (3.60 ANGSTROMS)</scope>
    <scope>FUNCTION</scope>
    <scope>SUBCELLULAR LOCATION</scope>
    <scope>SUBUNIT</scope>
</reference>
<reference evidence="27" key="24">
    <citation type="journal article" date="2017" name="Cell">
        <title>Cryo-EM Structure of a Pre-catalytic Human Spliceosome Primed for Activation.</title>
        <authorList>
            <person name="Bertram K."/>
            <person name="Agafonov D.E."/>
            <person name="Dybkov O."/>
            <person name="Haselbach D."/>
            <person name="Leelaram M.N."/>
            <person name="Will C.L."/>
            <person name="Urlaub H."/>
            <person name="Kastner B."/>
            <person name="Luhrmann R."/>
            <person name="Stark H."/>
        </authorList>
    </citation>
    <scope>STRUCTURE BY ELECTRON MICROSCOPY (4.50 ANGSTROMS)</scope>
    <scope>FUNCTION</scope>
    <scope>SUBCELLULAR LOCATION</scope>
    <scope>SUBUNIT</scope>
    <scope>IDENTIFICATION BY MASS SPECTROMETRY</scope>
</reference>
<reference evidence="26" key="25">
    <citation type="journal article" date="2017" name="Nature">
        <title>Cryo-EM structure of a human spliceosome activated for step 2 of splicing.</title>
        <authorList>
            <person name="Bertram K."/>
            <person name="Agafonov D.E."/>
            <person name="Liu W.T."/>
            <person name="Dybkov O."/>
            <person name="Will C.L."/>
            <person name="Hartmuth K."/>
            <person name="Urlaub H."/>
            <person name="Kastner B."/>
            <person name="Stark H."/>
            <person name="Luhrmann R."/>
        </authorList>
    </citation>
    <scope>STRUCTURE BY ELECTRON MICROSCOPY (5.90 ANGSTROMS)</scope>
    <scope>FUNCTION</scope>
    <scope>SUBCELLULAR LOCATION</scope>
    <scope>SUBUNIT</scope>
    <scope>IDENTIFICATION BY MASS SPECTROMETRY</scope>
</reference>
<reference evidence="30 31 32" key="26">
    <citation type="journal article" date="2020" name="Nucleic Acids Res.">
        <title>Negative cooperativity between Gemin2 and RNA provides insights into RNA selection and the SMN complex's release in snRNP assembly.</title>
        <authorList>
            <person name="Yi H."/>
            <person name="Mu L."/>
            <person name="Shen C."/>
            <person name="Kong X."/>
            <person name="Wang Y."/>
            <person name="Hou Y."/>
            <person name="Zhang R."/>
        </authorList>
    </citation>
    <scope>X-RAY CRYSTALLOGRAPHY (3.12 ANGSTROMS) IN COMPLEX WITH GEMIN2; SNRPD1; SNRPD2; SNRPF; SNRPG AND SMN1</scope>
    <scope>INTERACTION WITH GEMIN2; SNRPG AND SNRPF</scope>
</reference>
<reference evidence="33" key="27">
    <citation type="journal article" date="2020" name="Nature">
        <title>Molecular architecture of the human 17S U2 snRNP.</title>
        <authorList>
            <person name="Zhang Z."/>
            <person name="Will C.L."/>
            <person name="Bertram K."/>
            <person name="Dybkov O."/>
            <person name="Hartmuth K."/>
            <person name="Agafonov D.E."/>
            <person name="Hofele R."/>
            <person name="Urlaub H."/>
            <person name="Kastner B."/>
            <person name="Luehrmann R."/>
            <person name="Stark H."/>
        </authorList>
    </citation>
    <scope>STRUCTURE BY ELECTRON MICROSCOPY (4.10 ANGSTROMS) IN COMPLEX WITH THE 17S U2 SNRNP COMPLEX</scope>
    <scope>FUNCTION</scope>
    <scope>IDENTIFICATION IN THE 17S U2 SNRNP COMPLEX</scope>
</reference>
<reference evidence="34" key="28">
    <citation type="journal article" date="2021" name="Science">
        <title>Structure of the activated human minor spliceosome.</title>
        <authorList>
            <person name="Bai R."/>
            <person name="Wan R."/>
            <person name="Wang L."/>
            <person name="Xu K."/>
            <person name="Zhang Q."/>
            <person name="Lei J."/>
            <person name="Shi Y."/>
        </authorList>
    </citation>
    <scope>STRUCTURE BY ELECTRON MICROSCOPY (2.89 ANGSTROMS)</scope>
    <scope>SUBUNIT</scope>
</reference>
<reference evidence="35" key="29">
    <citation type="journal article" date="2023" name="Nat. Commun.">
        <title>Mechanisms of the RNA helicases DDX42 and DDX46 in human U2 snRNP assembly.</title>
        <authorList>
            <person name="Yang F."/>
            <person name="Bian T."/>
            <person name="Zhan X."/>
            <person name="Chen Z."/>
            <person name="Xing Z."/>
            <person name="Larsen N.A."/>
            <person name="Zhang X."/>
            <person name="Shi Y."/>
        </authorList>
    </citation>
    <scope>STRUCTURE BY ELECTRON MICROSCOPY (2.70 ANGSTROMS) IN COMPLEX WITH THE 17S U2 SNRNP COMPLEX</scope>
    <scope>IDENTIFICATION IN THE 17S U2 SNRNP COMPLEX</scope>
</reference>
<evidence type="ECO:0000255" key="1">
    <source>
        <dbReference type="PROSITE-ProRule" id="PRU01346"/>
    </source>
</evidence>
<evidence type="ECO:0000269" key="2">
    <source>
    </source>
</evidence>
<evidence type="ECO:0000269" key="3">
    <source>
    </source>
</evidence>
<evidence type="ECO:0000269" key="4">
    <source>
    </source>
</evidence>
<evidence type="ECO:0000269" key="5">
    <source>
    </source>
</evidence>
<evidence type="ECO:0000269" key="6">
    <source>
    </source>
</evidence>
<evidence type="ECO:0000269" key="7">
    <source>
    </source>
</evidence>
<evidence type="ECO:0000269" key="8">
    <source>
    </source>
</evidence>
<evidence type="ECO:0000269" key="9">
    <source>
    </source>
</evidence>
<evidence type="ECO:0000269" key="10">
    <source>
    </source>
</evidence>
<evidence type="ECO:0000269" key="11">
    <source>
    </source>
</evidence>
<evidence type="ECO:0000269" key="12">
    <source>
    </source>
</evidence>
<evidence type="ECO:0000269" key="13">
    <source>
    </source>
</evidence>
<evidence type="ECO:0000269" key="14">
    <source>
    </source>
</evidence>
<evidence type="ECO:0000269" key="15">
    <source>
    </source>
</evidence>
<evidence type="ECO:0000269" key="16">
    <source>
    </source>
</evidence>
<evidence type="ECO:0000269" key="17">
    <source>
    </source>
</evidence>
<evidence type="ECO:0000269" key="18">
    <source>
    </source>
</evidence>
<evidence type="ECO:0000269" key="19">
    <source>
    </source>
</evidence>
<evidence type="ECO:0000269" key="20">
    <source>
    </source>
</evidence>
<evidence type="ECO:0000269" key="21">
    <source>
    </source>
</evidence>
<evidence type="ECO:0000269" key="22">
    <source>
    </source>
</evidence>
<evidence type="ECO:0000305" key="23"/>
<evidence type="ECO:0007744" key="24">
    <source>
        <dbReference type="PDB" id="3JCR"/>
    </source>
</evidence>
<evidence type="ECO:0007744" key="25">
    <source>
        <dbReference type="PDB" id="4PJO"/>
    </source>
</evidence>
<evidence type="ECO:0007744" key="26">
    <source>
        <dbReference type="PDB" id="5MQF"/>
    </source>
</evidence>
<evidence type="ECO:0007744" key="27">
    <source>
        <dbReference type="PDB" id="5O9Z"/>
    </source>
</evidence>
<evidence type="ECO:0007744" key="28">
    <source>
        <dbReference type="PDB" id="5XJC"/>
    </source>
</evidence>
<evidence type="ECO:0007744" key="29">
    <source>
        <dbReference type="PDB" id="5XJL"/>
    </source>
</evidence>
<evidence type="ECO:0007744" key="30">
    <source>
        <dbReference type="PDB" id="5XJQ"/>
    </source>
</evidence>
<evidence type="ECO:0007744" key="31">
    <source>
        <dbReference type="PDB" id="5XJR"/>
    </source>
</evidence>
<evidence type="ECO:0007744" key="32">
    <source>
        <dbReference type="PDB" id="5XJS"/>
    </source>
</evidence>
<evidence type="ECO:0007744" key="33">
    <source>
        <dbReference type="PDB" id="6Y5Q"/>
    </source>
</evidence>
<evidence type="ECO:0007744" key="34">
    <source>
        <dbReference type="PDB" id="7DVQ"/>
    </source>
</evidence>
<evidence type="ECO:0007744" key="35">
    <source>
        <dbReference type="PDB" id="8HK1"/>
    </source>
</evidence>
<evidence type="ECO:0007829" key="36">
    <source>
        <dbReference type="PDB" id="5XJL"/>
    </source>
</evidence>
<comment type="function">
    <text evidence="4 5 6 8 9 12 13 14 15 16 17 18 20">Plays a role in pre-mRNA splicing as a core component of the spliceosomal U1, U2, U4 and U5 small nuclear ribonucleoproteins (snRNPs), the building blocks of the spliceosome (PubMed:11991638, PubMed:18984161, PubMed:19325628, PubMed:23246290, PubMed:23333303, PubMed:25555158, PubMed:26912367, PubMed:28076346, PubMed:28502770, PubMed:28781166, PubMed:32494006). Component of both the pre-catalytic spliceosome B complex and activated spliceosome C complexes (PubMed:11991638, PubMed:28076346, PubMed:28502770, PubMed:28781166). As a component of the minor spliceosome, involved in the splicing of U12-type introns in pre-mRNAs (PubMed:15146077). As part of the U7 snRNP it is involved in histone 3'-end processing (PubMed:12975319).</text>
</comment>
<comment type="subunit">
    <text evidence="2 3 4 6 7 8 9 10 11 12 13 14 15 16 17 18 19 20 21 22">Core component of the spliceosomal U1, U2, U4 and U5 small nuclear ribonucleoproteins (snRNPs), the building blocks of the spliceosome (PubMed:11991638, PubMed:19325628, PubMed:21516107, PubMed:23246290, PubMed:25555158, PubMed:26912367, PubMed:28076346, PubMed:28502770, PubMed:28781166, PubMed:32494006, PubMed:36797247). Most spliceosomal snRNPs contain a common set of Sm proteins, SNRPB, SNRPD1, SNRPD2, SNRPD3, SNRPE, SNRPF and SNRPG that assemble in a heptameric protein ring on the Sm site of the small nuclear RNA to form the core snRNP (PubMed:19325628, PubMed:21516107, PubMed:25555158, PubMed:26912367, PubMed:28076346, PubMed:28502770, PubMed:28781166). Component of the U1 snRNP (PubMed:19325628, PubMed:25555158). The U1 snRNP is composed of the U1 snRNA and the 7 core Sm proteins SNRPB, SNRPD1, SNRPD2, SNRPD3, SNRPE, SNRPF and SNRPG, and at least three U1 snRNP-specific proteins SNRNP70/U1-70K, SNRPA/U1-A and SNRPC/U1-C (PubMed:19325628, PubMed:25555158). Component of the U4/U6-U5 tri-snRNP complex composed of the U4, U6 and U5 snRNAs and at least PRPF3, PRPF4, PRPF6, PRPF8, PRPF31, SNRNP200, TXNL4A, SNRNP40, SNRPB, SNRPD1, SNRPD2, SNRPD3, SNRPE, SNRPF, SNRPG, DDX23, CD2BP2, PPIH, SNU13, EFTUD2, SART1 and USP39, plus LSM2, LSM3, LSM4, LSM5, LSM6, LSM7 and LSM8 (PubMed:26912367). Component of the U7 snRNP complex, or U7 Sm protein core complex, that is composed of the U7 snRNA and at least LSM10, LSM11, SNRPB, SNRPD3, SNRPE, SNRPF and SNRPG; the complex does not contain SNRPD1 and SNRPD2 (PubMed:11574479). Component of the minor spliceosome, which splices U12-type introns (PubMed:15146077, PubMed:33509932). Part of the SMN-Sm complex that contains SMN1, GEMIN2/SIP1, DDX20/GEMIN3, GEMIN4, GEMIN5, GEMIN6, GEMIN7, GEMIN8, STRAP/UNRIP and the Sm proteins SNRPB, SNRPD1, SNRPD2, SNRPD3, SNRPE, SNRPF and SNRPG; catalyzes core snRNPs assembly (PubMed:16314521, PubMed:18984161). Forms a 6S pICln-Sm complex composed of CLNS1A/pICln, SNRPD1, SNRPD2, SNRPE, SNRPF and SNRPG; ring-like structure where CLNS1A/pICln mimics additional Sm proteins and which is unable to assemble into the core snRNP (PubMed:18984161, PubMed:23333303). Interacts with SMN1; the interaction is direct (PubMed:10500148). Interacts with GEMIN2 (via N-terminus); the interaction is direct (PubMed:21816274, PubMed:31799625). Interacts with SNRPF; the interaction is direct (PubMed:21816274, PubMed:31799625). Interacts with SNRPG; the interaction is direct (PubMed:21816274, PubMed:31799625).</text>
</comment>
<comment type="interaction">
    <interactant intactId="EBI-348082">
        <id>P62304</id>
    </interactant>
    <interactant intactId="EBI-443630">
        <id>Q8TEQ6</id>
        <label>GEMIN5</label>
    </interactant>
    <organismsDiffer>false</organismsDiffer>
    <experiments>6</experiments>
</comment>
<comment type="interaction">
    <interactant intactId="EBI-348082">
        <id>P62304</id>
    </interactant>
    <interactant intactId="EBI-752301">
        <id>Q8WXD5</id>
        <label>GEMIN6</label>
    </interactant>
    <organismsDiffer>false</organismsDiffer>
    <experiments>5</experiments>
</comment>
<comment type="interaction">
    <interactant intactId="EBI-348082">
        <id>P62304</id>
    </interactant>
    <interactant intactId="EBI-347416">
        <id>Q9Y333</id>
        <label>LSM2</label>
    </interactant>
    <organismsDiffer>false</organismsDiffer>
    <experiments>5</experiments>
</comment>
<comment type="interaction">
    <interactant intactId="EBI-348082">
        <id>P62304</id>
    </interactant>
    <interactant intactId="EBI-373007">
        <id>Q9Y4Y9</id>
        <label>LSM5</label>
    </interactant>
    <organismsDiffer>false</organismsDiffer>
    <experiments>5</experiments>
</comment>
<comment type="interaction">
    <interactant intactId="EBI-348082">
        <id>P62304</id>
    </interactant>
    <interactant intactId="EBI-2462271">
        <id>Q15428</id>
        <label>SF3A2</label>
    </interactant>
    <organismsDiffer>false</organismsDiffer>
    <experiments>5</experiments>
</comment>
<comment type="interaction">
    <interactant intactId="EBI-348082">
        <id>P62304</id>
    </interactant>
    <interactant intactId="EBI-356900">
        <id>P62306</id>
        <label>SNRPF</label>
    </interactant>
    <organismsDiffer>false</organismsDiffer>
    <experiments>14</experiments>
</comment>
<comment type="interaction">
    <interactant intactId="EBI-348082">
        <id>P62304</id>
    </interactant>
    <interactant intactId="EBI-624585">
        <id>P62308</id>
        <label>SNRPG</label>
    </interactant>
    <organismsDiffer>false</organismsDiffer>
    <experiments>11</experiments>
</comment>
<comment type="subcellular location">
    <subcellularLocation>
        <location evidence="8">Cytoplasm</location>
        <location evidence="8">Cytosol</location>
    </subcellularLocation>
    <subcellularLocation>
        <location evidence="3 4 12 15 16 17 18">Nucleus</location>
    </subcellularLocation>
    <text evidence="23">SMN-mediated assembly into core snRNPs occurs in the cytosol before SMN-mediated transport to the nucleus to be included in spliceosomes.</text>
</comment>
<comment type="tissue specificity">
    <text evidence="12">Widely expressed. In scalp skin, it is present in the hair follicle, the epidermis, and the dermis.</text>
</comment>
<comment type="disease" evidence="12">
    <disease id="DI-03644">
        <name>Hypotrichosis 11</name>
        <acronym>HYPT11</acronym>
        <description>A form of hypotrichosis, a condition characterized by the presence of less than the normal amount of hair and abnormal hair follicles and shafts, which are thin and atrophic. The extent of scalp and body hair involvement can be very variable, within as well as between families. HYPT11 is an autosomal dominant form characterized by scanty or absent eyebrows and a highly variable degree of alopecia since birth, ranging from slight thinning of scalp and axillary hair to complete loss of scalp and body hair. Pubic hair remains mainly unaffected.</description>
        <dbReference type="MIM" id="615059"/>
    </disease>
    <text>The disease is caused by variants affecting the gene represented in this entry.</text>
</comment>
<comment type="miscellaneous">
    <text>Patients with systemic lupus erythematosus produce antibodies which interact with snRNP proteins.</text>
</comment>
<comment type="similarity">
    <text evidence="23">Belongs to the snRNP Sm proteins family.</text>
</comment>
<sequence>MAYRGQGQKVQKVMVQPINLIFRYLQNRSRIQVWLYEQVNMRIEGCIIGFDEYMNLVLDDAEEIHSKTKSRKQLGRIMLKGDNITLLQSVSN</sequence>